<name>ATPF_HAEI8</name>
<organism>
    <name type="scientific">Haemophilus influenzae (strain 86-028NP)</name>
    <dbReference type="NCBI Taxonomy" id="281310"/>
    <lineage>
        <taxon>Bacteria</taxon>
        <taxon>Pseudomonadati</taxon>
        <taxon>Pseudomonadota</taxon>
        <taxon>Gammaproteobacteria</taxon>
        <taxon>Pasteurellales</taxon>
        <taxon>Pasteurellaceae</taxon>
        <taxon>Haemophilus</taxon>
    </lineage>
</organism>
<comment type="function">
    <text evidence="1">F(1)F(0) ATP synthase produces ATP from ADP in the presence of a proton or sodium gradient. F-type ATPases consist of two structural domains, F(1) containing the extramembraneous catalytic core and F(0) containing the membrane proton channel, linked together by a central stalk and a peripheral stalk. During catalysis, ATP synthesis in the catalytic domain of F(1) is coupled via a rotary mechanism of the central stalk subunits to proton translocation.</text>
</comment>
<comment type="function">
    <text evidence="1">Component of the F(0) channel, it forms part of the peripheral stalk, linking F(1) to F(0).</text>
</comment>
<comment type="subunit">
    <text evidence="1">F-type ATPases have 2 components, F(1) - the catalytic core - and F(0) - the membrane proton channel. F(1) has five subunits: alpha(3), beta(3), gamma(1), delta(1), epsilon(1). F(0) has three main subunits: a(1), b(2) and c(10-14). The alpha and beta chains form an alternating ring which encloses part of the gamma chain. F(1) is attached to F(0) by a central stalk formed by the gamma and epsilon chains, while a peripheral stalk is formed by the delta and b chains.</text>
</comment>
<comment type="subcellular location">
    <subcellularLocation>
        <location evidence="1">Cell inner membrane</location>
        <topology evidence="1">Single-pass membrane protein</topology>
    </subcellularLocation>
</comment>
<comment type="similarity">
    <text evidence="1">Belongs to the ATPase B chain family.</text>
</comment>
<evidence type="ECO:0000255" key="1">
    <source>
        <dbReference type="HAMAP-Rule" id="MF_01398"/>
    </source>
</evidence>
<feature type="chain" id="PRO_0000368512" description="ATP synthase subunit b">
    <location>
        <begin position="1"/>
        <end position="156"/>
    </location>
</feature>
<feature type="transmembrane region" description="Helical" evidence="1">
    <location>
        <begin position="11"/>
        <end position="31"/>
    </location>
</feature>
<proteinExistence type="inferred from homology"/>
<protein>
    <recommendedName>
        <fullName evidence="1">ATP synthase subunit b</fullName>
    </recommendedName>
    <alternativeName>
        <fullName evidence="1">ATP synthase F(0) sector subunit b</fullName>
    </alternativeName>
    <alternativeName>
        <fullName evidence="1">ATPase subunit I</fullName>
    </alternativeName>
    <alternativeName>
        <fullName evidence="1">F-type ATPase subunit b</fullName>
        <shortName evidence="1">F-ATPase subunit b</shortName>
    </alternativeName>
</protein>
<keyword id="KW-0066">ATP synthesis</keyword>
<keyword id="KW-0997">Cell inner membrane</keyword>
<keyword id="KW-1003">Cell membrane</keyword>
<keyword id="KW-0138">CF(0)</keyword>
<keyword id="KW-0375">Hydrogen ion transport</keyword>
<keyword id="KW-0406">Ion transport</keyword>
<keyword id="KW-0472">Membrane</keyword>
<keyword id="KW-0812">Transmembrane</keyword>
<keyword id="KW-1133">Transmembrane helix</keyword>
<keyword id="KW-0813">Transport</keyword>
<accession>Q4QN60</accession>
<reference key="1">
    <citation type="journal article" date="2005" name="J. Bacteriol.">
        <title>Genomic sequence of an otitis media isolate of nontypeable Haemophilus influenzae: comparative study with H. influenzae serotype d, strain KW20.</title>
        <authorList>
            <person name="Harrison A."/>
            <person name="Dyer D.W."/>
            <person name="Gillaspy A."/>
            <person name="Ray W.C."/>
            <person name="Mungur R."/>
            <person name="Carson M.B."/>
            <person name="Zhong H."/>
            <person name="Gipson J."/>
            <person name="Gipson M."/>
            <person name="Johnson L.S."/>
            <person name="Lewis L."/>
            <person name="Bakaletz L.O."/>
            <person name="Munson R.S. Jr."/>
        </authorList>
    </citation>
    <scope>NUCLEOTIDE SEQUENCE [LARGE SCALE GENOMIC DNA]</scope>
    <source>
        <strain>86-028NP</strain>
    </source>
</reference>
<dbReference type="EMBL" id="CP000057">
    <property type="protein sequence ID" value="AAX87537.1"/>
    <property type="molecule type" value="Genomic_DNA"/>
</dbReference>
<dbReference type="RefSeq" id="WP_005629246.1">
    <property type="nucleotide sequence ID" value="NC_007146.2"/>
</dbReference>
<dbReference type="SMR" id="Q4QN60"/>
<dbReference type="GeneID" id="93219496"/>
<dbReference type="KEGG" id="hit:NTHI0613"/>
<dbReference type="HOGENOM" id="CLU_079215_4_5_6"/>
<dbReference type="Proteomes" id="UP000002525">
    <property type="component" value="Chromosome"/>
</dbReference>
<dbReference type="GO" id="GO:0005886">
    <property type="term" value="C:plasma membrane"/>
    <property type="evidence" value="ECO:0007669"/>
    <property type="project" value="UniProtKB-SubCell"/>
</dbReference>
<dbReference type="GO" id="GO:0045259">
    <property type="term" value="C:proton-transporting ATP synthase complex"/>
    <property type="evidence" value="ECO:0007669"/>
    <property type="project" value="UniProtKB-KW"/>
</dbReference>
<dbReference type="GO" id="GO:0046933">
    <property type="term" value="F:proton-transporting ATP synthase activity, rotational mechanism"/>
    <property type="evidence" value="ECO:0007669"/>
    <property type="project" value="UniProtKB-UniRule"/>
</dbReference>
<dbReference type="GO" id="GO:0046961">
    <property type="term" value="F:proton-transporting ATPase activity, rotational mechanism"/>
    <property type="evidence" value="ECO:0007669"/>
    <property type="project" value="TreeGrafter"/>
</dbReference>
<dbReference type="CDD" id="cd06503">
    <property type="entry name" value="ATP-synt_Fo_b"/>
    <property type="match status" value="1"/>
</dbReference>
<dbReference type="FunFam" id="1.20.5.620:FF:000001">
    <property type="entry name" value="ATP synthase subunit b"/>
    <property type="match status" value="1"/>
</dbReference>
<dbReference type="Gene3D" id="1.20.5.620">
    <property type="entry name" value="F1F0 ATP synthase subunit B, membrane domain"/>
    <property type="match status" value="1"/>
</dbReference>
<dbReference type="HAMAP" id="MF_01398">
    <property type="entry name" value="ATP_synth_b_bprime"/>
    <property type="match status" value="1"/>
</dbReference>
<dbReference type="InterPro" id="IPR028987">
    <property type="entry name" value="ATP_synth_B-like_membr_sf"/>
</dbReference>
<dbReference type="InterPro" id="IPR002146">
    <property type="entry name" value="ATP_synth_b/b'su_bac/chlpt"/>
</dbReference>
<dbReference type="InterPro" id="IPR005864">
    <property type="entry name" value="ATP_synth_F0_bsu_bac"/>
</dbReference>
<dbReference type="InterPro" id="IPR050059">
    <property type="entry name" value="ATP_synthase_B_chain"/>
</dbReference>
<dbReference type="NCBIfam" id="TIGR01144">
    <property type="entry name" value="ATP_synt_b"/>
    <property type="match status" value="1"/>
</dbReference>
<dbReference type="NCBIfam" id="NF004411">
    <property type="entry name" value="PRK05759.1-2"/>
    <property type="match status" value="1"/>
</dbReference>
<dbReference type="NCBIfam" id="NF004413">
    <property type="entry name" value="PRK05759.1-4"/>
    <property type="match status" value="1"/>
</dbReference>
<dbReference type="PANTHER" id="PTHR33445:SF1">
    <property type="entry name" value="ATP SYNTHASE SUBUNIT B"/>
    <property type="match status" value="1"/>
</dbReference>
<dbReference type="PANTHER" id="PTHR33445">
    <property type="entry name" value="ATP SYNTHASE SUBUNIT B', CHLOROPLASTIC"/>
    <property type="match status" value="1"/>
</dbReference>
<dbReference type="Pfam" id="PF00430">
    <property type="entry name" value="ATP-synt_B"/>
    <property type="match status" value="1"/>
</dbReference>
<dbReference type="SUPFAM" id="SSF81573">
    <property type="entry name" value="F1F0 ATP synthase subunit B, membrane domain"/>
    <property type="match status" value="1"/>
</dbReference>
<gene>
    <name evidence="1" type="primary">atpF</name>
    <name type="ordered locus">NTHI0613</name>
</gene>
<sequence length="156" mass="17172">MNLNATLIGQLIAFALFVWFCMKFVWPPIINAIETRQSQIANALASAEAAKKEQADTKNLVEQELSAAKLQAQDILDAANKRRNEVLDEVKAEAEELKAKIIAQGYAEVEAERKRVQEELRLKVASLAVAGAEKIVGRSIDEAANNDIIDKLVAEL</sequence>